<protein>
    <recommendedName>
        <fullName evidence="4">tRNA (guanosine(34)-2'-O)-methyltransferase</fullName>
        <ecNumber evidence="1 5">2.1.1.205</ecNumber>
    </recommendedName>
    <alternativeName>
        <fullName evidence="1">2'-O-ribose RNA methyltransferase TRM7 homolog 2</fullName>
    </alternativeName>
</protein>
<reference key="1">
    <citation type="journal article" date="2000" name="Science">
        <title>The genome sequence of Drosophila melanogaster.</title>
        <authorList>
            <person name="Adams M.D."/>
            <person name="Celniker S.E."/>
            <person name="Holt R.A."/>
            <person name="Evans C.A."/>
            <person name="Gocayne J.D."/>
            <person name="Amanatides P.G."/>
            <person name="Scherer S.E."/>
            <person name="Li P.W."/>
            <person name="Hoskins R.A."/>
            <person name="Galle R.F."/>
            <person name="George R.A."/>
            <person name="Lewis S.E."/>
            <person name="Richards S."/>
            <person name="Ashburner M."/>
            <person name="Henderson S.N."/>
            <person name="Sutton G.G."/>
            <person name="Wortman J.R."/>
            <person name="Yandell M.D."/>
            <person name="Zhang Q."/>
            <person name="Chen L.X."/>
            <person name="Brandon R.C."/>
            <person name="Rogers Y.-H.C."/>
            <person name="Blazej R.G."/>
            <person name="Champe M."/>
            <person name="Pfeiffer B.D."/>
            <person name="Wan K.H."/>
            <person name="Doyle C."/>
            <person name="Baxter E.G."/>
            <person name="Helt G."/>
            <person name="Nelson C.R."/>
            <person name="Miklos G.L.G."/>
            <person name="Abril J.F."/>
            <person name="Agbayani A."/>
            <person name="An H.-J."/>
            <person name="Andrews-Pfannkoch C."/>
            <person name="Baldwin D."/>
            <person name="Ballew R.M."/>
            <person name="Basu A."/>
            <person name="Baxendale J."/>
            <person name="Bayraktaroglu L."/>
            <person name="Beasley E.M."/>
            <person name="Beeson K.Y."/>
            <person name="Benos P.V."/>
            <person name="Berman B.P."/>
            <person name="Bhandari D."/>
            <person name="Bolshakov S."/>
            <person name="Borkova D."/>
            <person name="Botchan M.R."/>
            <person name="Bouck J."/>
            <person name="Brokstein P."/>
            <person name="Brottier P."/>
            <person name="Burtis K.C."/>
            <person name="Busam D.A."/>
            <person name="Butler H."/>
            <person name="Cadieu E."/>
            <person name="Center A."/>
            <person name="Chandra I."/>
            <person name="Cherry J.M."/>
            <person name="Cawley S."/>
            <person name="Dahlke C."/>
            <person name="Davenport L.B."/>
            <person name="Davies P."/>
            <person name="de Pablos B."/>
            <person name="Delcher A."/>
            <person name="Deng Z."/>
            <person name="Mays A.D."/>
            <person name="Dew I."/>
            <person name="Dietz S.M."/>
            <person name="Dodson K."/>
            <person name="Doup L.E."/>
            <person name="Downes M."/>
            <person name="Dugan-Rocha S."/>
            <person name="Dunkov B.C."/>
            <person name="Dunn P."/>
            <person name="Durbin K.J."/>
            <person name="Evangelista C.C."/>
            <person name="Ferraz C."/>
            <person name="Ferriera S."/>
            <person name="Fleischmann W."/>
            <person name="Fosler C."/>
            <person name="Gabrielian A.E."/>
            <person name="Garg N.S."/>
            <person name="Gelbart W.M."/>
            <person name="Glasser K."/>
            <person name="Glodek A."/>
            <person name="Gong F."/>
            <person name="Gorrell J.H."/>
            <person name="Gu Z."/>
            <person name="Guan P."/>
            <person name="Harris M."/>
            <person name="Harris N.L."/>
            <person name="Harvey D.A."/>
            <person name="Heiman T.J."/>
            <person name="Hernandez J.R."/>
            <person name="Houck J."/>
            <person name="Hostin D."/>
            <person name="Houston K.A."/>
            <person name="Howland T.J."/>
            <person name="Wei M.-H."/>
            <person name="Ibegwam C."/>
            <person name="Jalali M."/>
            <person name="Kalush F."/>
            <person name="Karpen G.H."/>
            <person name="Ke Z."/>
            <person name="Kennison J.A."/>
            <person name="Ketchum K.A."/>
            <person name="Kimmel B.E."/>
            <person name="Kodira C.D."/>
            <person name="Kraft C.L."/>
            <person name="Kravitz S."/>
            <person name="Kulp D."/>
            <person name="Lai Z."/>
            <person name="Lasko P."/>
            <person name="Lei Y."/>
            <person name="Levitsky A.A."/>
            <person name="Li J.H."/>
            <person name="Li Z."/>
            <person name="Liang Y."/>
            <person name="Lin X."/>
            <person name="Liu X."/>
            <person name="Mattei B."/>
            <person name="McIntosh T.C."/>
            <person name="McLeod M.P."/>
            <person name="McPherson D."/>
            <person name="Merkulov G."/>
            <person name="Milshina N.V."/>
            <person name="Mobarry C."/>
            <person name="Morris J."/>
            <person name="Moshrefi A."/>
            <person name="Mount S.M."/>
            <person name="Moy M."/>
            <person name="Murphy B."/>
            <person name="Murphy L."/>
            <person name="Muzny D.M."/>
            <person name="Nelson D.L."/>
            <person name="Nelson D.R."/>
            <person name="Nelson K.A."/>
            <person name="Nixon K."/>
            <person name="Nusskern D.R."/>
            <person name="Pacleb J.M."/>
            <person name="Palazzolo M."/>
            <person name="Pittman G.S."/>
            <person name="Pan S."/>
            <person name="Pollard J."/>
            <person name="Puri V."/>
            <person name="Reese M.G."/>
            <person name="Reinert K."/>
            <person name="Remington K."/>
            <person name="Saunders R.D.C."/>
            <person name="Scheeler F."/>
            <person name="Shen H."/>
            <person name="Shue B.C."/>
            <person name="Siden-Kiamos I."/>
            <person name="Simpson M."/>
            <person name="Skupski M.P."/>
            <person name="Smith T.J."/>
            <person name="Spier E."/>
            <person name="Spradling A.C."/>
            <person name="Stapleton M."/>
            <person name="Strong R."/>
            <person name="Sun E."/>
            <person name="Svirskas R."/>
            <person name="Tector C."/>
            <person name="Turner R."/>
            <person name="Venter E."/>
            <person name="Wang A.H."/>
            <person name="Wang X."/>
            <person name="Wang Z.-Y."/>
            <person name="Wassarman D.A."/>
            <person name="Weinstock G.M."/>
            <person name="Weissenbach J."/>
            <person name="Williams S.M."/>
            <person name="Woodage T."/>
            <person name="Worley K.C."/>
            <person name="Wu D."/>
            <person name="Yang S."/>
            <person name="Yao Q.A."/>
            <person name="Ye J."/>
            <person name="Yeh R.-F."/>
            <person name="Zaveri J.S."/>
            <person name="Zhan M."/>
            <person name="Zhang G."/>
            <person name="Zhao Q."/>
            <person name="Zheng L."/>
            <person name="Zheng X.H."/>
            <person name="Zhong F.N."/>
            <person name="Zhong W."/>
            <person name="Zhou X."/>
            <person name="Zhu S.C."/>
            <person name="Zhu X."/>
            <person name="Smith H.O."/>
            <person name="Gibbs R.A."/>
            <person name="Myers E.W."/>
            <person name="Rubin G.M."/>
            <person name="Venter J.C."/>
        </authorList>
    </citation>
    <scope>NUCLEOTIDE SEQUENCE [LARGE SCALE GENOMIC DNA]</scope>
    <source>
        <strain>Berkeley</strain>
    </source>
</reference>
<reference key="2">
    <citation type="journal article" date="2002" name="Genome Biol.">
        <title>Annotation of the Drosophila melanogaster euchromatic genome: a systematic review.</title>
        <authorList>
            <person name="Misra S."/>
            <person name="Crosby M.A."/>
            <person name="Mungall C.J."/>
            <person name="Matthews B.B."/>
            <person name="Campbell K.S."/>
            <person name="Hradecky P."/>
            <person name="Huang Y."/>
            <person name="Kaminker J.S."/>
            <person name="Millburn G.H."/>
            <person name="Prochnik S.E."/>
            <person name="Smith C.D."/>
            <person name="Tupy J.L."/>
            <person name="Whitfield E.J."/>
            <person name="Bayraktaroglu L."/>
            <person name="Berman B.P."/>
            <person name="Bettencourt B.R."/>
            <person name="Celniker S.E."/>
            <person name="de Grey A.D.N.J."/>
            <person name="Drysdale R.A."/>
            <person name="Harris N.L."/>
            <person name="Richter J."/>
            <person name="Russo S."/>
            <person name="Schroeder A.J."/>
            <person name="Shu S.Q."/>
            <person name="Stapleton M."/>
            <person name="Yamada C."/>
            <person name="Ashburner M."/>
            <person name="Gelbart W.M."/>
            <person name="Rubin G.M."/>
            <person name="Lewis S.E."/>
        </authorList>
    </citation>
    <scope>GENOME REANNOTATION</scope>
    <source>
        <strain>Berkeley</strain>
    </source>
</reference>
<reference key="3">
    <citation type="journal article" date="2020" name="Nucleic Acids Res.">
        <title>tRNA 2'-O-methylation by a duo of TRM7/FTSJ1 proteins modulates small RNA silencing in Drosophila.</title>
        <authorList>
            <person name="Angelova M.T."/>
            <person name="Dimitrova D.G."/>
            <person name="Da Silva B."/>
            <person name="Marchand V."/>
            <person name="Jacquier C."/>
            <person name="Achour C."/>
            <person name="Brazane M."/>
            <person name="Goyenvalle C."/>
            <person name="Bourguignon-Igel V."/>
            <person name="Shehzada S."/>
            <person name="Khouider S."/>
            <person name="Lence T."/>
            <person name="Guerineau V."/>
            <person name="Roignant J.Y."/>
            <person name="Antoniewski C."/>
            <person name="Teysset L."/>
            <person name="Bregeon D."/>
            <person name="Motorin Y."/>
            <person name="Schaefer M.R."/>
            <person name="Carre C."/>
        </authorList>
    </citation>
    <scope>FUNCTION</scope>
    <scope>CATALYTIC ACTIVITY</scope>
    <scope>INTERACTION WITH CG33172</scope>
    <scope>DISRUPTION PHENOTYPE</scope>
</reference>
<reference key="4">
    <citation type="journal article" date="2023" name="Life. Sci Alliance">
        <title>The ribose methylation enzyme FTSJ1 has a conserved role in neuron morphology and learning performance.</title>
        <authorList>
            <person name="Brazane M."/>
            <person name="Dimitrova D.G."/>
            <person name="Pigeon J."/>
            <person name="Paolantoni C."/>
            <person name="Ye T."/>
            <person name="Marchand V."/>
            <person name="Da Silva B."/>
            <person name="Schaefer E."/>
            <person name="Angelova M.T."/>
            <person name="Stark Z."/>
            <person name="Delatycki M."/>
            <person name="Dudding-Byth T."/>
            <person name="Gecz J."/>
            <person name="Placais P.Y."/>
            <person name="Teysset L."/>
            <person name="Preat T."/>
            <person name="Piton A."/>
            <person name="Hassan B.A."/>
            <person name="Roignant J.Y."/>
            <person name="Motorin Y."/>
            <person name="Carre C."/>
        </authorList>
    </citation>
    <scope>FUNCTION</scope>
    <scope>DISRUPTION PHENOTYPE</scope>
</reference>
<dbReference type="EC" id="2.1.1.205" evidence="1 5"/>
<dbReference type="EMBL" id="AE014297">
    <property type="protein sequence ID" value="AAF55857.1"/>
    <property type="molecule type" value="Genomic_DNA"/>
</dbReference>
<dbReference type="RefSeq" id="NP_650947.1">
    <property type="nucleotide sequence ID" value="NM_142690.2"/>
</dbReference>
<dbReference type="SMR" id="Q9VDD9"/>
<dbReference type="BioGRID" id="67479">
    <property type="interactions" value="2"/>
</dbReference>
<dbReference type="DIP" id="DIP-18992N"/>
<dbReference type="FunCoup" id="Q9VDD9">
    <property type="interactions" value="123"/>
</dbReference>
<dbReference type="IntAct" id="Q9VDD9">
    <property type="interactions" value="1"/>
</dbReference>
<dbReference type="STRING" id="7227.FBpp0083432"/>
<dbReference type="PaxDb" id="7227-FBpp0083432"/>
<dbReference type="EnsemblMetazoa" id="FBtr0084029">
    <property type="protein sequence ID" value="FBpp0083432"/>
    <property type="gene ID" value="FBgn0038861"/>
</dbReference>
<dbReference type="GeneID" id="42508"/>
<dbReference type="KEGG" id="dme:Dmel_CG7009"/>
<dbReference type="UCSC" id="CG7009-RA">
    <property type="organism name" value="d. melanogaster"/>
</dbReference>
<dbReference type="AGR" id="FB:FBgn0038861"/>
<dbReference type="CTD" id="42508"/>
<dbReference type="FlyBase" id="FBgn0038861">
    <property type="gene designation" value="Trm7-34"/>
</dbReference>
<dbReference type="VEuPathDB" id="VectorBase:FBgn0038861"/>
<dbReference type="eggNOG" id="KOG1099">
    <property type="taxonomic scope" value="Eukaryota"/>
</dbReference>
<dbReference type="GeneTree" id="ENSGT00730000111146"/>
<dbReference type="HOGENOM" id="CLU_009422_1_2_1"/>
<dbReference type="InParanoid" id="Q9VDD9"/>
<dbReference type="OMA" id="FKDVCVF"/>
<dbReference type="OrthoDB" id="289250at2759"/>
<dbReference type="PhylomeDB" id="Q9VDD9"/>
<dbReference type="BioGRID-ORCS" id="42508">
    <property type="hits" value="0 hits in 1 CRISPR screen"/>
</dbReference>
<dbReference type="GenomeRNAi" id="42508"/>
<dbReference type="PRO" id="PR:Q9VDD9"/>
<dbReference type="Proteomes" id="UP000000803">
    <property type="component" value="Chromosome 3R"/>
</dbReference>
<dbReference type="Bgee" id="FBgn0038861">
    <property type="expression patterns" value="Expressed in embryonic/larval hemocyte (Drosophila) and 57 other cell types or tissues"/>
</dbReference>
<dbReference type="ExpressionAtlas" id="Q9VDD9">
    <property type="expression patterns" value="baseline and differential"/>
</dbReference>
<dbReference type="GO" id="GO:0005737">
    <property type="term" value="C:cytoplasm"/>
    <property type="evidence" value="ECO:0000318"/>
    <property type="project" value="GO_Central"/>
</dbReference>
<dbReference type="GO" id="GO:0005829">
    <property type="term" value="C:cytosol"/>
    <property type="evidence" value="ECO:0000250"/>
    <property type="project" value="UniProtKB"/>
</dbReference>
<dbReference type="GO" id="GO:1904047">
    <property type="term" value="F:S-adenosyl-L-methionine binding"/>
    <property type="evidence" value="ECO:0000250"/>
    <property type="project" value="UniProtKB"/>
</dbReference>
<dbReference type="GO" id="GO:0106340">
    <property type="term" value="F:tRNA (cytidine(32)/guanosine(34)-2'-O)-methyltransferase activity"/>
    <property type="evidence" value="ECO:0000315"/>
    <property type="project" value="FlyBase"/>
</dbReference>
<dbReference type="GO" id="GO:0141098">
    <property type="term" value="F:tRNA (cytidine(34)-2'-O)-methyltransferase activity"/>
    <property type="evidence" value="ECO:0000315"/>
    <property type="project" value="FlyBase"/>
</dbReference>
<dbReference type="GO" id="GO:0016423">
    <property type="term" value="F:tRNA (guanine) methyltransferase activity"/>
    <property type="evidence" value="ECO:0000250"/>
    <property type="project" value="UniProtKB"/>
</dbReference>
<dbReference type="GO" id="GO:0008175">
    <property type="term" value="F:tRNA methyltransferase activity"/>
    <property type="evidence" value="ECO:0000318"/>
    <property type="project" value="GO_Central"/>
</dbReference>
<dbReference type="GO" id="GO:0002181">
    <property type="term" value="P:cytoplasmic translation"/>
    <property type="evidence" value="ECO:0000250"/>
    <property type="project" value="UniProtKB"/>
</dbReference>
<dbReference type="GO" id="GO:0022008">
    <property type="term" value="P:neurogenesis"/>
    <property type="evidence" value="ECO:0000314"/>
    <property type="project" value="UniProtKB"/>
</dbReference>
<dbReference type="GO" id="GO:0030488">
    <property type="term" value="P:tRNA methylation"/>
    <property type="evidence" value="ECO:0000318"/>
    <property type="project" value="GO_Central"/>
</dbReference>
<dbReference type="GO" id="GO:0002128">
    <property type="term" value="P:tRNA nucleoside ribose methylation"/>
    <property type="evidence" value="ECO:0000250"/>
    <property type="project" value="UniProtKB"/>
</dbReference>
<dbReference type="GO" id="GO:0002131">
    <property type="term" value="P:wobble position cytosine ribose methylation"/>
    <property type="evidence" value="ECO:0000315"/>
    <property type="project" value="FlyBase"/>
</dbReference>
<dbReference type="GO" id="GO:0002129">
    <property type="term" value="P:wobble position guanine ribose methylation"/>
    <property type="evidence" value="ECO:0000315"/>
    <property type="project" value="FlyBase"/>
</dbReference>
<dbReference type="GO" id="GO:0002130">
    <property type="term" value="P:wobble position ribose methylation"/>
    <property type="evidence" value="ECO:0000250"/>
    <property type="project" value="UniProtKB"/>
</dbReference>
<dbReference type="FunFam" id="3.40.50.150:FF:000187">
    <property type="entry name" value="Ribosomal RNA methyltransferase putative"/>
    <property type="match status" value="1"/>
</dbReference>
<dbReference type="Gene3D" id="3.40.50.150">
    <property type="entry name" value="Vaccinia Virus protein VP39"/>
    <property type="match status" value="1"/>
</dbReference>
<dbReference type="HAMAP" id="MF_01547">
    <property type="entry name" value="RNA_methyltr_E"/>
    <property type="match status" value="1"/>
</dbReference>
<dbReference type="HAMAP" id="MF_03162">
    <property type="entry name" value="RNA_methyltr_E_TRM7"/>
    <property type="match status" value="1"/>
</dbReference>
<dbReference type="InterPro" id="IPR028590">
    <property type="entry name" value="RNA_methyltr_E_TRM7"/>
</dbReference>
<dbReference type="InterPro" id="IPR050082">
    <property type="entry name" value="RNA_methyltr_RlmE"/>
</dbReference>
<dbReference type="InterPro" id="IPR002877">
    <property type="entry name" value="RNA_MeTrfase_FtsJ_dom"/>
</dbReference>
<dbReference type="InterPro" id="IPR015507">
    <property type="entry name" value="rRNA-MeTfrase_E"/>
</dbReference>
<dbReference type="InterPro" id="IPR029063">
    <property type="entry name" value="SAM-dependent_MTases_sf"/>
</dbReference>
<dbReference type="PANTHER" id="PTHR10920">
    <property type="entry name" value="RIBOSOMAL RNA METHYLTRANSFERASE"/>
    <property type="match status" value="1"/>
</dbReference>
<dbReference type="PANTHER" id="PTHR10920:SF12">
    <property type="entry name" value="TRNA (CYTIDINE(32)_GUANOSINE(34)-2'-O)-METHYLTRANSFERASE-RELATED"/>
    <property type="match status" value="1"/>
</dbReference>
<dbReference type="Pfam" id="PF01728">
    <property type="entry name" value="FtsJ"/>
    <property type="match status" value="1"/>
</dbReference>
<dbReference type="SUPFAM" id="SSF53335">
    <property type="entry name" value="S-adenosyl-L-methionine-dependent methyltransferases"/>
    <property type="match status" value="1"/>
</dbReference>
<name>TRM72_DROME</name>
<proteinExistence type="evidence at protein level"/>
<evidence type="ECO:0000255" key="1">
    <source>
        <dbReference type="HAMAP-Rule" id="MF_03162"/>
    </source>
</evidence>
<evidence type="ECO:0000269" key="2">
    <source>
    </source>
</evidence>
<evidence type="ECO:0000269" key="3">
    <source>
    </source>
</evidence>
<evidence type="ECO:0000305" key="4"/>
<evidence type="ECO:0000305" key="5">
    <source>
    </source>
</evidence>
<evidence type="ECO:0000312" key="6">
    <source>
        <dbReference type="FlyBase" id="FBgn0038861"/>
    </source>
</evidence>
<organism>
    <name type="scientific">Drosophila melanogaster</name>
    <name type="common">Fruit fly</name>
    <dbReference type="NCBI Taxonomy" id="7227"/>
    <lineage>
        <taxon>Eukaryota</taxon>
        <taxon>Metazoa</taxon>
        <taxon>Ecdysozoa</taxon>
        <taxon>Arthropoda</taxon>
        <taxon>Hexapoda</taxon>
        <taxon>Insecta</taxon>
        <taxon>Pterygota</taxon>
        <taxon>Neoptera</taxon>
        <taxon>Endopterygota</taxon>
        <taxon>Diptera</taxon>
        <taxon>Brachycera</taxon>
        <taxon>Muscomorpha</taxon>
        <taxon>Ephydroidea</taxon>
        <taxon>Drosophilidae</taxon>
        <taxon>Drosophila</taxon>
        <taxon>Sophophora</taxon>
    </lineage>
</organism>
<gene>
    <name evidence="6" type="primary">Trm7-34</name>
    <name type="ORF">CG7009</name>
</gene>
<sequence>MGRTSKDKRDIFYRLAKEQGWRARSAFKLLQADETFQLLEGLTRAVDLCAAPGSWSQVLAKRLYEPLPPEEREKVKIIAVDLQGMAPIEGVKQLRADISKESTAEAIIEFFGGEKAQIVVSDGAPDSTGMHDFDSYVQGELLLSALSISTFILEEGGSFVSKIYRADRTSRLYTQLKRFFKNVCVFKPSASRNSSIEAFVVAREFCLPDGYKPCNLTTEWHDQPESWVGRKKESPPVVQVPFVAYKGELDSDRTYDLGENYVYKEPVQQPLTAAYQDILQKTSQVNIKYEGIRVIHDEEMLKKWLENDENKSEKLGACVT</sequence>
<keyword id="KW-0963">Cytoplasm</keyword>
<keyword id="KW-0489">Methyltransferase</keyword>
<keyword id="KW-1185">Reference proteome</keyword>
<keyword id="KW-0949">S-adenosyl-L-methionine</keyword>
<keyword id="KW-0808">Transferase</keyword>
<keyword id="KW-0819">tRNA processing</keyword>
<comment type="function">
    <text evidence="2 3">Methylates the 2'-O-ribose of nucleotides at position 34 of the tRNA anticodon loop of substrate tRNAs (PubMed:31943105). May require WDR6 for methylation of the nucleotide at position 34 of the anticodon loop of substrate tRNAs (PubMed:31943105). Plays a role in neurogenesis (PubMed:36720500). Requisite for RNA-mediated gene silencing (PubMed:31943105). Modifies position 34 in tRNA(Leu(CAA)), tRNA(Leu(CAG)), tRNA(Phe(GAA)), and tRNA(Trp(CCA)) (PubMed:31943105).</text>
</comment>
<comment type="catalytic activity">
    <reaction evidence="1 5">
        <text>cytidine(32)/guanosine(34) in tRNA + 2 S-adenosyl-L-methionine = 2'-O-methylcytidine(32)/2'-O-methylguanosine(34) in tRNA + 2 S-adenosyl-L-homocysteine + 2 H(+)</text>
        <dbReference type="Rhea" id="RHEA:42396"/>
        <dbReference type="Rhea" id="RHEA-COMP:10246"/>
        <dbReference type="Rhea" id="RHEA-COMP:10247"/>
        <dbReference type="ChEBI" id="CHEBI:15378"/>
        <dbReference type="ChEBI" id="CHEBI:57856"/>
        <dbReference type="ChEBI" id="CHEBI:59789"/>
        <dbReference type="ChEBI" id="CHEBI:74269"/>
        <dbReference type="ChEBI" id="CHEBI:74445"/>
        <dbReference type="ChEBI" id="CHEBI:74495"/>
        <dbReference type="ChEBI" id="CHEBI:82748"/>
        <dbReference type="EC" id="2.1.1.205"/>
    </reaction>
</comment>
<comment type="subunit">
    <text evidence="2">Interacts with CG33172/WDR6.</text>
</comment>
<comment type="subcellular location">
    <subcellularLocation>
        <location evidence="1">Cytoplasm</location>
    </subcellularLocation>
</comment>
<comment type="disruption phenotype">
    <text evidence="2 3">Decreases methylation of position 32 in tRNA(Phe) (PubMed:31943105). Impairs long-term memory functioning with no apparent effect on short-term memory (PubMed:36720500). Sensitizes flies to infection by Drosophila C virus (DCV) (PubMed:31943105). Leads to derepression of piRNA pathway-mediated transposable element silencing, whereas small non-coding RNA levels appear normal (PubMed:31943105). Leads to locomotor defects and a reduction in ovarian size (PubMed:31943105). RNAi-mediated knockdown impairs small interfering RNA-mediated silencing (PubMed:31943105). Simultaneous knockdown of Trm7-32 decreases lifespan (PubMed:31943105).</text>
</comment>
<comment type="similarity">
    <text evidence="1">Belongs to the class I-like SAM-binding methyltransferase superfamily. RNA methyltransferase RlmE family. TRM7 subfamily.</text>
</comment>
<accession>Q9VDD9</accession>
<feature type="chain" id="PRO_0000155583" description="tRNA (guanosine(34)-2'-O)-methyltransferase">
    <location>
        <begin position="1"/>
        <end position="320"/>
    </location>
</feature>
<feature type="active site" description="Proton acceptor" evidence="1">
    <location>
        <position position="162"/>
    </location>
</feature>
<feature type="binding site" evidence="1">
    <location>
        <position position="53"/>
    </location>
    <ligand>
        <name>S-adenosyl-L-methionine</name>
        <dbReference type="ChEBI" id="CHEBI:59789"/>
    </ligand>
</feature>
<feature type="binding site" evidence="1">
    <location>
        <position position="55"/>
    </location>
    <ligand>
        <name>S-adenosyl-L-methionine</name>
        <dbReference type="ChEBI" id="CHEBI:59789"/>
    </ligand>
</feature>
<feature type="binding site" evidence="1">
    <location>
        <position position="81"/>
    </location>
    <ligand>
        <name>S-adenosyl-L-methionine</name>
        <dbReference type="ChEBI" id="CHEBI:59789"/>
    </ligand>
</feature>
<feature type="binding site" evidence="1">
    <location>
        <position position="97"/>
    </location>
    <ligand>
        <name>S-adenosyl-L-methionine</name>
        <dbReference type="ChEBI" id="CHEBI:59789"/>
    </ligand>
</feature>
<feature type="binding site" evidence="1">
    <location>
        <position position="122"/>
    </location>
    <ligand>
        <name>S-adenosyl-L-methionine</name>
        <dbReference type="ChEBI" id="CHEBI:59789"/>
    </ligand>
</feature>